<protein>
    <recommendedName>
        <fullName>Uncharacterized protein MJECL07</fullName>
    </recommendedName>
</protein>
<dbReference type="EMBL" id="L77118">
    <property type="protein sequence ID" value="AAC37080.1"/>
    <property type="molecule type" value="Genomic_DNA"/>
</dbReference>
<dbReference type="PIR" id="G64510">
    <property type="entry name" value="G64510"/>
</dbReference>
<dbReference type="SMR" id="Q60269"/>
<dbReference type="FunCoup" id="Q60269">
    <property type="interactions" value="1"/>
</dbReference>
<dbReference type="PaxDb" id="243232-MJ_ECL07"/>
<dbReference type="EnsemblBacteria" id="AAC37080">
    <property type="protein sequence ID" value="AAC37080"/>
    <property type="gene ID" value="MJ_ECL07"/>
</dbReference>
<dbReference type="KEGG" id="mja:MJ_ECL07"/>
<dbReference type="eggNOG" id="arCOG00367">
    <property type="taxonomic scope" value="Archaea"/>
</dbReference>
<dbReference type="HOGENOM" id="CLU_665023_0_0_2"/>
<dbReference type="InParanoid" id="Q60269"/>
<dbReference type="OrthoDB" id="33831at2157"/>
<dbReference type="PhylomeDB" id="Q60269"/>
<dbReference type="Proteomes" id="UP000000805">
    <property type="component" value="Plasmid pDSM2661_1"/>
</dbReference>
<dbReference type="InterPro" id="IPR016738">
    <property type="entry name" value="NurA-like"/>
</dbReference>
<dbReference type="InterPro" id="IPR018977">
    <property type="entry name" value="NurA_domain"/>
</dbReference>
<dbReference type="Pfam" id="PF09376">
    <property type="entry name" value="NurA"/>
    <property type="match status" value="1"/>
</dbReference>
<dbReference type="PIRSF" id="PIRSF018871">
    <property type="entry name" value="UCP018871"/>
    <property type="match status" value="1"/>
</dbReference>
<dbReference type="SMART" id="SM00933">
    <property type="entry name" value="NurA"/>
    <property type="match status" value="1"/>
</dbReference>
<sequence>MIKMFIISKNHLDIIYNFVDWEFKNISSIGNIINDEVVWNELPKGVEGVLCGVDGSRGKVEFCSGIVYGLSSYAIGKNIEKGMFELGVLPFFKEEDRVRRLMMTLEYRLATLVSKNVDLILLDGTLSGALIMPPLLSGDTNPLTVYPDLAEDLGWKFIKSLDNFWDEVLENLDGNIYDNTLLAIKIFQKFDSTYSEYVEDIREELFAANILNSRLEIACWGVYFEYIELLHSLNRLLEYDCTFIAKNFENSIITEKLKENNINVDILLDATLLNQIFRGRGYTTLKLEDCYNKKRSRRHINKICDVFGDYFKFLEVIRENPFEMIPKTYVRFAESSPILALEVPRTNKKSIEEVISLLIPYSKLGYPRYLKDAHNKAKISKKEFKKQILFMIKYISEKNRDFSLFFQSGREVLGE</sequence>
<keyword id="KW-0614">Plasmid</keyword>
<keyword id="KW-1185">Reference proteome</keyword>
<organism>
    <name type="scientific">Methanocaldococcus jannaschii (strain ATCC 43067 / DSM 2661 / JAL-1 / JCM 10045 / NBRC 100440)</name>
    <name type="common">Methanococcus jannaschii</name>
    <dbReference type="NCBI Taxonomy" id="243232"/>
    <lineage>
        <taxon>Archaea</taxon>
        <taxon>Methanobacteriati</taxon>
        <taxon>Methanobacteriota</taxon>
        <taxon>Methanomada group</taxon>
        <taxon>Methanococci</taxon>
        <taxon>Methanococcales</taxon>
        <taxon>Methanocaldococcaceae</taxon>
        <taxon>Methanocaldococcus</taxon>
    </lineage>
</organism>
<accession>Q60269</accession>
<name>Y3507_METJA</name>
<reference key="1">
    <citation type="journal article" date="1996" name="Science">
        <title>Complete genome sequence of the methanogenic archaeon, Methanococcus jannaschii.</title>
        <authorList>
            <person name="Bult C.J."/>
            <person name="White O."/>
            <person name="Olsen G.J."/>
            <person name="Zhou L."/>
            <person name="Fleischmann R.D."/>
            <person name="Sutton G.G."/>
            <person name="Blake J.A."/>
            <person name="FitzGerald L.M."/>
            <person name="Clayton R.A."/>
            <person name="Gocayne J.D."/>
            <person name="Kerlavage A.R."/>
            <person name="Dougherty B.A."/>
            <person name="Tomb J.-F."/>
            <person name="Adams M.D."/>
            <person name="Reich C.I."/>
            <person name="Overbeek R."/>
            <person name="Kirkness E.F."/>
            <person name="Weinstock K.G."/>
            <person name="Merrick J.M."/>
            <person name="Glodek A."/>
            <person name="Scott J.L."/>
            <person name="Geoghagen N.S.M."/>
            <person name="Weidman J.F."/>
            <person name="Fuhrmann J.L."/>
            <person name="Nguyen D."/>
            <person name="Utterback T.R."/>
            <person name="Kelley J.M."/>
            <person name="Peterson J.D."/>
            <person name="Sadow P.W."/>
            <person name="Hanna M.C."/>
            <person name="Cotton M.D."/>
            <person name="Roberts K.M."/>
            <person name="Hurst M.A."/>
            <person name="Kaine B.P."/>
            <person name="Borodovsky M."/>
            <person name="Klenk H.-P."/>
            <person name="Fraser C.M."/>
            <person name="Smith H.O."/>
            <person name="Woese C.R."/>
            <person name="Venter J.C."/>
        </authorList>
    </citation>
    <scope>NUCLEOTIDE SEQUENCE [LARGE SCALE GENOMIC DNA]</scope>
    <source>
        <strain>ATCC 43067 / DSM 2661 / JAL-1 / JCM 10045 / NBRC 100440</strain>
    </source>
</reference>
<gene>
    <name type="ordered locus">MJECL07</name>
</gene>
<geneLocation type="plasmid">
    <name>large ECE</name>
</geneLocation>
<feature type="chain" id="PRO_0000107499" description="Uncharacterized protein MJECL07">
    <location>
        <begin position="1"/>
        <end position="415"/>
    </location>
</feature>
<proteinExistence type="predicted"/>